<dbReference type="EC" id="3.1.3.5" evidence="1"/>
<dbReference type="EMBL" id="AE017282">
    <property type="protein sequence ID" value="AAU91499.1"/>
    <property type="molecule type" value="Genomic_DNA"/>
</dbReference>
<dbReference type="RefSeq" id="WP_010961643.1">
    <property type="nucleotide sequence ID" value="NC_002977.6"/>
</dbReference>
<dbReference type="SMR" id="Q604W8"/>
<dbReference type="STRING" id="243233.MCA2418"/>
<dbReference type="GeneID" id="88224619"/>
<dbReference type="KEGG" id="mca:MCA2418"/>
<dbReference type="eggNOG" id="COG0496">
    <property type="taxonomic scope" value="Bacteria"/>
</dbReference>
<dbReference type="HOGENOM" id="CLU_045192_1_2_6"/>
<dbReference type="Proteomes" id="UP000006821">
    <property type="component" value="Chromosome"/>
</dbReference>
<dbReference type="GO" id="GO:0005737">
    <property type="term" value="C:cytoplasm"/>
    <property type="evidence" value="ECO:0007669"/>
    <property type="project" value="UniProtKB-SubCell"/>
</dbReference>
<dbReference type="GO" id="GO:0008254">
    <property type="term" value="F:3'-nucleotidase activity"/>
    <property type="evidence" value="ECO:0007669"/>
    <property type="project" value="TreeGrafter"/>
</dbReference>
<dbReference type="GO" id="GO:0008253">
    <property type="term" value="F:5'-nucleotidase activity"/>
    <property type="evidence" value="ECO:0007669"/>
    <property type="project" value="UniProtKB-UniRule"/>
</dbReference>
<dbReference type="GO" id="GO:0004309">
    <property type="term" value="F:exopolyphosphatase activity"/>
    <property type="evidence" value="ECO:0007669"/>
    <property type="project" value="TreeGrafter"/>
</dbReference>
<dbReference type="GO" id="GO:0046872">
    <property type="term" value="F:metal ion binding"/>
    <property type="evidence" value="ECO:0007669"/>
    <property type="project" value="UniProtKB-UniRule"/>
</dbReference>
<dbReference type="GO" id="GO:0000166">
    <property type="term" value="F:nucleotide binding"/>
    <property type="evidence" value="ECO:0007669"/>
    <property type="project" value="UniProtKB-KW"/>
</dbReference>
<dbReference type="FunFam" id="3.40.1210.10:FF:000001">
    <property type="entry name" value="5'/3'-nucleotidase SurE"/>
    <property type="match status" value="1"/>
</dbReference>
<dbReference type="Gene3D" id="3.40.1210.10">
    <property type="entry name" value="Survival protein SurE-like phosphatase/nucleotidase"/>
    <property type="match status" value="1"/>
</dbReference>
<dbReference type="HAMAP" id="MF_00060">
    <property type="entry name" value="SurE"/>
    <property type="match status" value="1"/>
</dbReference>
<dbReference type="InterPro" id="IPR030048">
    <property type="entry name" value="SurE"/>
</dbReference>
<dbReference type="InterPro" id="IPR002828">
    <property type="entry name" value="SurE-like_Pase/nucleotidase"/>
</dbReference>
<dbReference type="InterPro" id="IPR036523">
    <property type="entry name" value="SurE-like_sf"/>
</dbReference>
<dbReference type="NCBIfam" id="NF001489">
    <property type="entry name" value="PRK00346.1-3"/>
    <property type="match status" value="1"/>
</dbReference>
<dbReference type="NCBIfam" id="NF001490">
    <property type="entry name" value="PRK00346.1-4"/>
    <property type="match status" value="1"/>
</dbReference>
<dbReference type="NCBIfam" id="TIGR00087">
    <property type="entry name" value="surE"/>
    <property type="match status" value="1"/>
</dbReference>
<dbReference type="PANTHER" id="PTHR30457">
    <property type="entry name" value="5'-NUCLEOTIDASE SURE"/>
    <property type="match status" value="1"/>
</dbReference>
<dbReference type="PANTHER" id="PTHR30457:SF12">
    <property type="entry name" value="5'_3'-NUCLEOTIDASE SURE"/>
    <property type="match status" value="1"/>
</dbReference>
<dbReference type="Pfam" id="PF01975">
    <property type="entry name" value="SurE"/>
    <property type="match status" value="1"/>
</dbReference>
<dbReference type="SUPFAM" id="SSF64167">
    <property type="entry name" value="SurE-like"/>
    <property type="match status" value="1"/>
</dbReference>
<evidence type="ECO:0000255" key="1">
    <source>
        <dbReference type="HAMAP-Rule" id="MF_00060"/>
    </source>
</evidence>
<organism>
    <name type="scientific">Methylococcus capsulatus (strain ATCC 33009 / NCIMB 11132 / Bath)</name>
    <dbReference type="NCBI Taxonomy" id="243233"/>
    <lineage>
        <taxon>Bacteria</taxon>
        <taxon>Pseudomonadati</taxon>
        <taxon>Pseudomonadota</taxon>
        <taxon>Gammaproteobacteria</taxon>
        <taxon>Methylococcales</taxon>
        <taxon>Methylococcaceae</taxon>
        <taxon>Methylococcus</taxon>
    </lineage>
</organism>
<proteinExistence type="inferred from homology"/>
<gene>
    <name evidence="1" type="primary">surE</name>
    <name type="ordered locus">MCA2418</name>
</gene>
<sequence length="251" mass="26856">MHILLSNDDGYAAPGLRALAAALSPLAKITVVAPERNRSGASNSLTLERPLRATRAENGFIRVDGTPTDCVHLAITGLLDSEPDMVFAGINHGANLGDDVIYSGTVAAATEGRFLGLPAVAISLAAHNPEHFETAAQVAIELLERIRENPLPADTILNVNVPDIPPDELRGYRATRLGARHKAEAVVRTRDPRGREIFWVGCAGPEADAGPGTDFHAIRQNCVSVTPLQIDLTRYERLDQLGAWLPGRVTA</sequence>
<name>SURE_METCA</name>
<reference key="1">
    <citation type="journal article" date="2004" name="PLoS Biol.">
        <title>Genomic insights into methanotrophy: the complete genome sequence of Methylococcus capsulatus (Bath).</title>
        <authorList>
            <person name="Ward N.L."/>
            <person name="Larsen O."/>
            <person name="Sakwa J."/>
            <person name="Bruseth L."/>
            <person name="Khouri H.M."/>
            <person name="Durkin A.S."/>
            <person name="Dimitrov G."/>
            <person name="Jiang L."/>
            <person name="Scanlan D."/>
            <person name="Kang K.H."/>
            <person name="Lewis M.R."/>
            <person name="Nelson K.E."/>
            <person name="Methe B.A."/>
            <person name="Wu M."/>
            <person name="Heidelberg J.F."/>
            <person name="Paulsen I.T."/>
            <person name="Fouts D.E."/>
            <person name="Ravel J."/>
            <person name="Tettelin H."/>
            <person name="Ren Q."/>
            <person name="Read T.D."/>
            <person name="DeBoy R.T."/>
            <person name="Seshadri R."/>
            <person name="Salzberg S.L."/>
            <person name="Jensen H.B."/>
            <person name="Birkeland N.K."/>
            <person name="Nelson W.C."/>
            <person name="Dodson R.J."/>
            <person name="Grindhaug S.H."/>
            <person name="Holt I.E."/>
            <person name="Eidhammer I."/>
            <person name="Jonasen I."/>
            <person name="Vanaken S."/>
            <person name="Utterback T.R."/>
            <person name="Feldblyum T.V."/>
            <person name="Fraser C.M."/>
            <person name="Lillehaug J.R."/>
            <person name="Eisen J.A."/>
        </authorList>
    </citation>
    <scope>NUCLEOTIDE SEQUENCE [LARGE SCALE GENOMIC DNA]</scope>
    <source>
        <strain>ATCC 33009 / NCIMB 11132 / Bath</strain>
    </source>
</reference>
<comment type="function">
    <text evidence="1">Nucleotidase that shows phosphatase activity on nucleoside 5'-monophosphates.</text>
</comment>
<comment type="catalytic activity">
    <reaction evidence="1">
        <text>a ribonucleoside 5'-phosphate + H2O = a ribonucleoside + phosphate</text>
        <dbReference type="Rhea" id="RHEA:12484"/>
        <dbReference type="ChEBI" id="CHEBI:15377"/>
        <dbReference type="ChEBI" id="CHEBI:18254"/>
        <dbReference type="ChEBI" id="CHEBI:43474"/>
        <dbReference type="ChEBI" id="CHEBI:58043"/>
        <dbReference type="EC" id="3.1.3.5"/>
    </reaction>
</comment>
<comment type="cofactor">
    <cofactor evidence="1">
        <name>a divalent metal cation</name>
        <dbReference type="ChEBI" id="CHEBI:60240"/>
    </cofactor>
    <text evidence="1">Binds 1 divalent metal cation per subunit.</text>
</comment>
<comment type="subcellular location">
    <subcellularLocation>
        <location evidence="1">Cytoplasm</location>
    </subcellularLocation>
</comment>
<comment type="similarity">
    <text evidence="1">Belongs to the SurE nucleotidase family.</text>
</comment>
<protein>
    <recommendedName>
        <fullName evidence="1">5'-nucleotidase SurE</fullName>
        <ecNumber evidence="1">3.1.3.5</ecNumber>
    </recommendedName>
    <alternativeName>
        <fullName evidence="1">Nucleoside 5'-monophosphate phosphohydrolase</fullName>
    </alternativeName>
</protein>
<keyword id="KW-0963">Cytoplasm</keyword>
<keyword id="KW-0378">Hydrolase</keyword>
<keyword id="KW-0479">Metal-binding</keyword>
<keyword id="KW-0547">Nucleotide-binding</keyword>
<keyword id="KW-1185">Reference proteome</keyword>
<accession>Q604W8</accession>
<feature type="chain" id="PRO_0000235625" description="5'-nucleotidase SurE">
    <location>
        <begin position="1"/>
        <end position="251"/>
    </location>
</feature>
<feature type="binding site" evidence="1">
    <location>
        <position position="8"/>
    </location>
    <ligand>
        <name>a divalent metal cation</name>
        <dbReference type="ChEBI" id="CHEBI:60240"/>
    </ligand>
</feature>
<feature type="binding site" evidence="1">
    <location>
        <position position="9"/>
    </location>
    <ligand>
        <name>a divalent metal cation</name>
        <dbReference type="ChEBI" id="CHEBI:60240"/>
    </ligand>
</feature>
<feature type="binding site" evidence="1">
    <location>
        <position position="39"/>
    </location>
    <ligand>
        <name>a divalent metal cation</name>
        <dbReference type="ChEBI" id="CHEBI:60240"/>
    </ligand>
</feature>
<feature type="binding site" evidence="1">
    <location>
        <position position="91"/>
    </location>
    <ligand>
        <name>a divalent metal cation</name>
        <dbReference type="ChEBI" id="CHEBI:60240"/>
    </ligand>
</feature>